<accession>A9IMA1</accession>
<protein>
    <recommendedName>
        <fullName evidence="1">Ribosomal RNA large subunit methyltransferase E</fullName>
        <ecNumber evidence="1">2.1.1.166</ecNumber>
    </recommendedName>
    <alternativeName>
        <fullName evidence="1">23S rRNA Um2552 methyltransferase</fullName>
    </alternativeName>
    <alternativeName>
        <fullName evidence="1">rRNA (uridine-2'-O-)-methyltransferase</fullName>
    </alternativeName>
</protein>
<comment type="function">
    <text evidence="1">Specifically methylates the uridine in position 2552 of 23S rRNA at the 2'-O position of the ribose in the fully assembled 50S ribosomal subunit.</text>
</comment>
<comment type="catalytic activity">
    <reaction evidence="1">
        <text>uridine(2552) in 23S rRNA + S-adenosyl-L-methionine = 2'-O-methyluridine(2552) in 23S rRNA + S-adenosyl-L-homocysteine + H(+)</text>
        <dbReference type="Rhea" id="RHEA:42720"/>
        <dbReference type="Rhea" id="RHEA-COMP:10202"/>
        <dbReference type="Rhea" id="RHEA-COMP:10203"/>
        <dbReference type="ChEBI" id="CHEBI:15378"/>
        <dbReference type="ChEBI" id="CHEBI:57856"/>
        <dbReference type="ChEBI" id="CHEBI:59789"/>
        <dbReference type="ChEBI" id="CHEBI:65315"/>
        <dbReference type="ChEBI" id="CHEBI:74478"/>
        <dbReference type="EC" id="2.1.1.166"/>
    </reaction>
</comment>
<comment type="subcellular location">
    <subcellularLocation>
        <location evidence="1">Cytoplasm</location>
    </subcellularLocation>
</comment>
<comment type="similarity">
    <text evidence="1">Belongs to the class I-like SAM-binding methyltransferase superfamily. RNA methyltransferase RlmE family.</text>
</comment>
<name>RLME_BART1</name>
<gene>
    <name evidence="1" type="primary">rlmE</name>
    <name evidence="1" type="synonym">ftsJ</name>
    <name evidence="1" type="synonym">rrmJ</name>
    <name type="ordered locus">BT_0171</name>
</gene>
<dbReference type="EC" id="2.1.1.166" evidence="1"/>
<dbReference type="EMBL" id="AM260525">
    <property type="protein sequence ID" value="CAK00655.1"/>
    <property type="molecule type" value="Genomic_DNA"/>
</dbReference>
<dbReference type="RefSeq" id="WP_012230516.1">
    <property type="nucleotide sequence ID" value="NC_010161.1"/>
</dbReference>
<dbReference type="SMR" id="A9IMA1"/>
<dbReference type="KEGG" id="btr:BT_0171"/>
<dbReference type="eggNOG" id="COG0293">
    <property type="taxonomic scope" value="Bacteria"/>
</dbReference>
<dbReference type="HOGENOM" id="CLU_009422_4_0_5"/>
<dbReference type="Proteomes" id="UP000001592">
    <property type="component" value="Chromosome"/>
</dbReference>
<dbReference type="GO" id="GO:0005737">
    <property type="term" value="C:cytoplasm"/>
    <property type="evidence" value="ECO:0007669"/>
    <property type="project" value="UniProtKB-SubCell"/>
</dbReference>
<dbReference type="GO" id="GO:0008650">
    <property type="term" value="F:rRNA (uridine-2'-O-)-methyltransferase activity"/>
    <property type="evidence" value="ECO:0007669"/>
    <property type="project" value="UniProtKB-UniRule"/>
</dbReference>
<dbReference type="Gene3D" id="3.40.50.150">
    <property type="entry name" value="Vaccinia Virus protein VP39"/>
    <property type="match status" value="1"/>
</dbReference>
<dbReference type="HAMAP" id="MF_01547">
    <property type="entry name" value="RNA_methyltr_E"/>
    <property type="match status" value="1"/>
</dbReference>
<dbReference type="InterPro" id="IPR050082">
    <property type="entry name" value="RNA_methyltr_RlmE"/>
</dbReference>
<dbReference type="InterPro" id="IPR002877">
    <property type="entry name" value="RNA_MeTrfase_FtsJ_dom"/>
</dbReference>
<dbReference type="InterPro" id="IPR015507">
    <property type="entry name" value="rRNA-MeTfrase_E"/>
</dbReference>
<dbReference type="InterPro" id="IPR029063">
    <property type="entry name" value="SAM-dependent_MTases_sf"/>
</dbReference>
<dbReference type="PANTHER" id="PTHR10920">
    <property type="entry name" value="RIBOSOMAL RNA METHYLTRANSFERASE"/>
    <property type="match status" value="1"/>
</dbReference>
<dbReference type="PANTHER" id="PTHR10920:SF18">
    <property type="entry name" value="RRNA METHYLTRANSFERASE 2, MITOCHONDRIAL"/>
    <property type="match status" value="1"/>
</dbReference>
<dbReference type="Pfam" id="PF01728">
    <property type="entry name" value="FtsJ"/>
    <property type="match status" value="1"/>
</dbReference>
<dbReference type="PIRSF" id="PIRSF005461">
    <property type="entry name" value="23S_rRNA_mtase"/>
    <property type="match status" value="1"/>
</dbReference>
<dbReference type="SUPFAM" id="SSF53335">
    <property type="entry name" value="S-adenosyl-L-methionine-dependent methyltransferases"/>
    <property type="match status" value="1"/>
</dbReference>
<reference key="1">
    <citation type="journal article" date="2007" name="Nat. Genet.">
        <title>Genomic analysis of Bartonella identifies type IV secretion systems as host adaptability factors.</title>
        <authorList>
            <person name="Saenz H.L."/>
            <person name="Engel P."/>
            <person name="Stoeckli M.C."/>
            <person name="Lanz C."/>
            <person name="Raddatz G."/>
            <person name="Vayssier-Taussat M."/>
            <person name="Birtles R."/>
            <person name="Schuster S.C."/>
            <person name="Dehio C."/>
        </authorList>
    </citation>
    <scope>NUCLEOTIDE SEQUENCE [LARGE SCALE GENOMIC DNA]</scope>
    <source>
        <strain>CIP 105476 / IBS 506</strain>
    </source>
</reference>
<feature type="chain" id="PRO_1000087672" description="Ribosomal RNA large subunit methyltransferase E">
    <location>
        <begin position="1"/>
        <end position="242"/>
    </location>
</feature>
<feature type="active site" description="Proton acceptor" evidence="1">
    <location>
        <position position="191"/>
    </location>
</feature>
<feature type="binding site" evidence="1">
    <location>
        <position position="88"/>
    </location>
    <ligand>
        <name>S-adenosyl-L-methionine</name>
        <dbReference type="ChEBI" id="CHEBI:59789"/>
    </ligand>
</feature>
<feature type="binding site" evidence="1">
    <location>
        <position position="90"/>
    </location>
    <ligand>
        <name>S-adenosyl-L-methionine</name>
        <dbReference type="ChEBI" id="CHEBI:59789"/>
    </ligand>
</feature>
<feature type="binding site" evidence="1">
    <location>
        <position position="111"/>
    </location>
    <ligand>
        <name>S-adenosyl-L-methionine</name>
        <dbReference type="ChEBI" id="CHEBI:59789"/>
    </ligand>
</feature>
<feature type="binding site" evidence="1">
    <location>
        <position position="127"/>
    </location>
    <ligand>
        <name>S-adenosyl-L-methionine</name>
        <dbReference type="ChEBI" id="CHEBI:59789"/>
    </ligand>
</feature>
<feature type="binding site" evidence="1">
    <location>
        <position position="151"/>
    </location>
    <ligand>
        <name>S-adenosyl-L-methionine</name>
        <dbReference type="ChEBI" id="CHEBI:59789"/>
    </ligand>
</feature>
<organism>
    <name type="scientific">Bartonella tribocorum (strain CIP 105476 / IBS 506)</name>
    <dbReference type="NCBI Taxonomy" id="382640"/>
    <lineage>
        <taxon>Bacteria</taxon>
        <taxon>Pseudomonadati</taxon>
        <taxon>Pseudomonadota</taxon>
        <taxon>Alphaproteobacteria</taxon>
        <taxon>Hyphomicrobiales</taxon>
        <taxon>Bartonellaceae</taxon>
        <taxon>Bartonella</taxon>
    </lineage>
</organism>
<sequence length="242" mass="26891">MKKTTKPPTGGYGGSGSHELYQRVKKKAGTIKASSRRWLERHLNDPYVHQSKVDGYRSRAAYKLIEINERYKFLKKGQKVIDLGAAPGGWCQVAERIVGSSNEKPSVVGIDYLHVDPLPRVAMLEMDFLHADAPQKLIETLGTKPDVVLSDMAAPTTGHRQTDHLRTIYLCEVAADFALSVLKPGGHFLAKAFQGGAENTLLAILKQHFKKVYHVKPPASRSESVELYLLALEFKGKTKIQE</sequence>
<keyword id="KW-0963">Cytoplasm</keyword>
<keyword id="KW-0489">Methyltransferase</keyword>
<keyword id="KW-0698">rRNA processing</keyword>
<keyword id="KW-0949">S-adenosyl-L-methionine</keyword>
<keyword id="KW-0808">Transferase</keyword>
<evidence type="ECO:0000255" key="1">
    <source>
        <dbReference type="HAMAP-Rule" id="MF_01547"/>
    </source>
</evidence>
<proteinExistence type="inferred from homology"/>